<name>MAEL_HUMAN</name>
<proteinExistence type="evidence at protein level"/>
<gene>
    <name type="primary">MAEL</name>
</gene>
<dbReference type="EMBL" id="DQ076156">
    <property type="protein sequence ID" value="AAY82463.1"/>
    <property type="molecule type" value="mRNA"/>
</dbReference>
<dbReference type="EMBL" id="GU383113">
    <property type="protein sequence ID" value="ADU33235.1"/>
    <property type="molecule type" value="mRNA"/>
</dbReference>
<dbReference type="EMBL" id="AK027810">
    <property type="protein sequence ID" value="BAB55385.1"/>
    <property type="molecule type" value="mRNA"/>
</dbReference>
<dbReference type="EMBL" id="AK302253">
    <property type="protein sequence ID" value="BAG63605.1"/>
    <property type="molecule type" value="mRNA"/>
</dbReference>
<dbReference type="EMBL" id="AL158837">
    <property type="status" value="NOT_ANNOTATED_CDS"/>
    <property type="molecule type" value="Genomic_DNA"/>
</dbReference>
<dbReference type="EMBL" id="BC028595">
    <property type="protein sequence ID" value="AAH28595.1"/>
    <property type="molecule type" value="mRNA"/>
</dbReference>
<dbReference type="EMBL" id="BC034310">
    <property type="protein sequence ID" value="AAH34310.1"/>
    <property type="molecule type" value="mRNA"/>
</dbReference>
<dbReference type="EMBL" id="AL133073">
    <property type="protein sequence ID" value="CAB61396.1"/>
    <property type="molecule type" value="mRNA"/>
</dbReference>
<dbReference type="CCDS" id="CCDS1257.1">
    <molecule id="Q96JY0-1"/>
</dbReference>
<dbReference type="CCDS" id="CCDS65712.1">
    <molecule id="Q96JY0-2"/>
</dbReference>
<dbReference type="PIR" id="T42673">
    <property type="entry name" value="T42673"/>
</dbReference>
<dbReference type="RefSeq" id="NP_001273306.1">
    <molecule id="Q96JY0-2"/>
    <property type="nucleotide sequence ID" value="NM_001286377.2"/>
</dbReference>
<dbReference type="RefSeq" id="NP_001273307.1">
    <property type="nucleotide sequence ID" value="NM_001286378.1"/>
</dbReference>
<dbReference type="RefSeq" id="NP_116247.1">
    <molecule id="Q96JY0-1"/>
    <property type="nucleotide sequence ID" value="NM_032858.3"/>
</dbReference>
<dbReference type="PDB" id="2CTO">
    <property type="method" value="NMR"/>
    <property type="chains" value="A=1-80"/>
</dbReference>
<dbReference type="PDBsum" id="2CTO"/>
<dbReference type="BMRB" id="Q96JY0"/>
<dbReference type="SMR" id="Q96JY0"/>
<dbReference type="BioGRID" id="124377">
    <property type="interactions" value="23"/>
</dbReference>
<dbReference type="FunCoup" id="Q96JY0">
    <property type="interactions" value="350"/>
</dbReference>
<dbReference type="IntAct" id="Q96JY0">
    <property type="interactions" value="3"/>
</dbReference>
<dbReference type="STRING" id="9606.ENSP00000356846"/>
<dbReference type="iPTMnet" id="Q96JY0"/>
<dbReference type="PhosphoSitePlus" id="Q96JY0"/>
<dbReference type="BioMuta" id="MAEL"/>
<dbReference type="DMDM" id="74760900"/>
<dbReference type="jPOST" id="Q96JY0"/>
<dbReference type="MassIVE" id="Q96JY0"/>
<dbReference type="PaxDb" id="9606-ENSP00000356846"/>
<dbReference type="PeptideAtlas" id="Q96JY0"/>
<dbReference type="ProteomicsDB" id="77014">
    <molecule id="Q96JY0-1"/>
</dbReference>
<dbReference type="ProteomicsDB" id="77015">
    <molecule id="Q96JY0-2"/>
</dbReference>
<dbReference type="ProteomicsDB" id="77016">
    <molecule id="Q96JY0-3"/>
</dbReference>
<dbReference type="Antibodypedia" id="34338">
    <property type="antibodies" value="61 antibodies from 21 providers"/>
</dbReference>
<dbReference type="DNASU" id="84944"/>
<dbReference type="Ensembl" id="ENST00000367870.6">
    <molecule id="Q96JY0-2"/>
    <property type="protein sequence ID" value="ENSP00000356844.2"/>
    <property type="gene ID" value="ENSG00000143194.13"/>
</dbReference>
<dbReference type="Ensembl" id="ENST00000367872.9">
    <molecule id="Q96JY0-1"/>
    <property type="protein sequence ID" value="ENSP00000356846.4"/>
    <property type="gene ID" value="ENSG00000143194.13"/>
</dbReference>
<dbReference type="GeneID" id="84944"/>
<dbReference type="KEGG" id="hsa:84944"/>
<dbReference type="MANE-Select" id="ENST00000367872.9">
    <property type="protein sequence ID" value="ENSP00000356846.4"/>
    <property type="RefSeq nucleotide sequence ID" value="NM_032858.3"/>
    <property type="RefSeq protein sequence ID" value="NP_116247.1"/>
</dbReference>
<dbReference type="UCSC" id="uc001gdy.3">
    <molecule id="Q96JY0-1"/>
    <property type="organism name" value="human"/>
</dbReference>
<dbReference type="AGR" id="HGNC:25929"/>
<dbReference type="CTD" id="84944"/>
<dbReference type="DisGeNET" id="84944"/>
<dbReference type="GeneCards" id="MAEL"/>
<dbReference type="HGNC" id="HGNC:25929">
    <property type="gene designation" value="MAEL"/>
</dbReference>
<dbReference type="HPA" id="ENSG00000143194">
    <property type="expression patterns" value="Tissue enriched (testis)"/>
</dbReference>
<dbReference type="MIM" id="611368">
    <property type="type" value="gene"/>
</dbReference>
<dbReference type="neXtProt" id="NX_Q96JY0"/>
<dbReference type="OpenTargets" id="ENSG00000143194"/>
<dbReference type="PharmGKB" id="PA142671488"/>
<dbReference type="VEuPathDB" id="HostDB:ENSG00000143194"/>
<dbReference type="eggNOG" id="ENOG502QTQB">
    <property type="taxonomic scope" value="Eukaryota"/>
</dbReference>
<dbReference type="GeneTree" id="ENSGT00390000003645"/>
<dbReference type="InParanoid" id="Q96JY0"/>
<dbReference type="OMA" id="KHEIFDH"/>
<dbReference type="OrthoDB" id="24555at2759"/>
<dbReference type="PAN-GO" id="Q96JY0">
    <property type="GO annotations" value="7 GO annotations based on evolutionary models"/>
</dbReference>
<dbReference type="PhylomeDB" id="Q96JY0"/>
<dbReference type="TreeFam" id="TF323573"/>
<dbReference type="PathwayCommons" id="Q96JY0"/>
<dbReference type="Reactome" id="R-HSA-5601884">
    <property type="pathway name" value="PIWI-interacting RNA (piRNA) biogenesis"/>
</dbReference>
<dbReference type="SignaLink" id="Q96JY0"/>
<dbReference type="BioGRID-ORCS" id="84944">
    <property type="hits" value="11 hits in 1149 CRISPR screens"/>
</dbReference>
<dbReference type="CD-CODE" id="DEE660B4">
    <property type="entry name" value="Stress granule"/>
</dbReference>
<dbReference type="ChiTaRS" id="MAEL">
    <property type="organism name" value="human"/>
</dbReference>
<dbReference type="EvolutionaryTrace" id="Q96JY0"/>
<dbReference type="GenomeRNAi" id="84944"/>
<dbReference type="Pharos" id="Q96JY0">
    <property type="development level" value="Tbio"/>
</dbReference>
<dbReference type="PRO" id="PR:Q96JY0"/>
<dbReference type="Proteomes" id="UP000005640">
    <property type="component" value="Chromosome 1"/>
</dbReference>
<dbReference type="RNAct" id="Q96JY0">
    <property type="molecule type" value="protein"/>
</dbReference>
<dbReference type="Bgee" id="ENSG00000143194">
    <property type="expression patterns" value="Expressed in secondary oocyte and 116 other cell types or tissues"/>
</dbReference>
<dbReference type="ExpressionAtlas" id="Q96JY0">
    <property type="expression patterns" value="baseline and differential"/>
</dbReference>
<dbReference type="GO" id="GO:0030849">
    <property type="term" value="C:autosome"/>
    <property type="evidence" value="ECO:0007669"/>
    <property type="project" value="Ensembl"/>
</dbReference>
<dbReference type="GO" id="GO:0000785">
    <property type="term" value="C:chromatin"/>
    <property type="evidence" value="ECO:0007669"/>
    <property type="project" value="Ensembl"/>
</dbReference>
<dbReference type="GO" id="GO:0033391">
    <property type="term" value="C:chromatoid body"/>
    <property type="evidence" value="ECO:0007669"/>
    <property type="project" value="Ensembl"/>
</dbReference>
<dbReference type="GO" id="GO:0005737">
    <property type="term" value="C:cytoplasm"/>
    <property type="evidence" value="ECO:0000250"/>
    <property type="project" value="UniProtKB"/>
</dbReference>
<dbReference type="GO" id="GO:0001673">
    <property type="term" value="C:male germ cell nucleus"/>
    <property type="evidence" value="ECO:0007669"/>
    <property type="project" value="Ensembl"/>
</dbReference>
<dbReference type="GO" id="GO:0005634">
    <property type="term" value="C:nucleus"/>
    <property type="evidence" value="ECO:0000250"/>
    <property type="project" value="UniProtKB"/>
</dbReference>
<dbReference type="GO" id="GO:0043186">
    <property type="term" value="C:P granule"/>
    <property type="evidence" value="ECO:0000250"/>
    <property type="project" value="UniProtKB"/>
</dbReference>
<dbReference type="GO" id="GO:0048471">
    <property type="term" value="C:perinuclear region of cytoplasm"/>
    <property type="evidence" value="ECO:0007669"/>
    <property type="project" value="Ensembl"/>
</dbReference>
<dbReference type="GO" id="GO:0071547">
    <property type="term" value="C:piP-body"/>
    <property type="evidence" value="ECO:0000250"/>
    <property type="project" value="UniProtKB"/>
</dbReference>
<dbReference type="GO" id="GO:0001741">
    <property type="term" value="C:XY body"/>
    <property type="evidence" value="ECO:0007669"/>
    <property type="project" value="Ensembl"/>
</dbReference>
<dbReference type="GO" id="GO:0043565">
    <property type="term" value="F:sequence-specific DNA binding"/>
    <property type="evidence" value="ECO:0000318"/>
    <property type="project" value="GO_Central"/>
</dbReference>
<dbReference type="GO" id="GO:0000902">
    <property type="term" value="P:cell morphogenesis"/>
    <property type="evidence" value="ECO:0007669"/>
    <property type="project" value="Ensembl"/>
</dbReference>
<dbReference type="GO" id="GO:0035234">
    <property type="term" value="P:ectopic germ cell programmed cell death"/>
    <property type="evidence" value="ECO:0007669"/>
    <property type="project" value="Ensembl"/>
</dbReference>
<dbReference type="GO" id="GO:0009566">
    <property type="term" value="P:fertilization"/>
    <property type="evidence" value="ECO:0007669"/>
    <property type="project" value="Ensembl"/>
</dbReference>
<dbReference type="GO" id="GO:0007129">
    <property type="term" value="P:homologous chromosome pairing at meiosis"/>
    <property type="evidence" value="ECO:0007669"/>
    <property type="project" value="Ensembl"/>
</dbReference>
<dbReference type="GO" id="GO:0008630">
    <property type="term" value="P:intrinsic apoptotic signaling pathway in response to DNA damage"/>
    <property type="evidence" value="ECO:0007669"/>
    <property type="project" value="Ensembl"/>
</dbReference>
<dbReference type="GO" id="GO:0007140">
    <property type="term" value="P:male meiotic nuclear division"/>
    <property type="evidence" value="ECO:0000318"/>
    <property type="project" value="GO_Central"/>
</dbReference>
<dbReference type="GO" id="GO:0043066">
    <property type="term" value="P:negative regulation of apoptotic process"/>
    <property type="evidence" value="ECO:0007669"/>
    <property type="project" value="Ensembl"/>
</dbReference>
<dbReference type="GO" id="GO:0051093">
    <property type="term" value="P:negative regulation of developmental process"/>
    <property type="evidence" value="ECO:0007669"/>
    <property type="project" value="Ensembl"/>
</dbReference>
<dbReference type="GO" id="GO:0045892">
    <property type="term" value="P:negative regulation of DNA-templated transcription"/>
    <property type="evidence" value="ECO:0000318"/>
    <property type="project" value="GO_Central"/>
</dbReference>
<dbReference type="GO" id="GO:2000242">
    <property type="term" value="P:negative regulation of reproductive process"/>
    <property type="evidence" value="ECO:0007669"/>
    <property type="project" value="Ensembl"/>
</dbReference>
<dbReference type="GO" id="GO:0000122">
    <property type="term" value="P:negative regulation of transcription by RNA polymerase II"/>
    <property type="evidence" value="ECO:0007669"/>
    <property type="project" value="Ensembl"/>
</dbReference>
<dbReference type="GO" id="GO:0034587">
    <property type="term" value="P:piRNA processing"/>
    <property type="evidence" value="ECO:0000250"/>
    <property type="project" value="UniProtKB"/>
</dbReference>
<dbReference type="GO" id="GO:0060964">
    <property type="term" value="P:regulation of miRNA-mediated gene silencing"/>
    <property type="evidence" value="ECO:0007669"/>
    <property type="project" value="InterPro"/>
</dbReference>
<dbReference type="GO" id="GO:0046620">
    <property type="term" value="P:regulation of organ growth"/>
    <property type="evidence" value="ECO:0007669"/>
    <property type="project" value="Ensembl"/>
</dbReference>
<dbReference type="GO" id="GO:0031047">
    <property type="term" value="P:regulatory ncRNA-mediated gene silencing"/>
    <property type="evidence" value="ECO:0000250"/>
    <property type="project" value="UniProtKB"/>
</dbReference>
<dbReference type="GO" id="GO:0007283">
    <property type="term" value="P:spermatogenesis"/>
    <property type="evidence" value="ECO:0000250"/>
    <property type="project" value="UniProtKB"/>
</dbReference>
<dbReference type="GO" id="GO:0141196">
    <property type="term" value="P:transposable element silencing by piRNA-mediated DNA methylation"/>
    <property type="evidence" value="ECO:0007669"/>
    <property type="project" value="Ensembl"/>
</dbReference>
<dbReference type="CDD" id="cd21992">
    <property type="entry name" value="HMG-box_MAEL"/>
    <property type="match status" value="1"/>
</dbReference>
<dbReference type="FunFam" id="1.10.30.10:FF:000035">
    <property type="entry name" value="Maelstrom spermatogenic transposon silencer"/>
    <property type="match status" value="1"/>
</dbReference>
<dbReference type="Gene3D" id="1.10.30.10">
    <property type="entry name" value="High mobility group box domain"/>
    <property type="match status" value="1"/>
</dbReference>
<dbReference type="InterPro" id="IPR009071">
    <property type="entry name" value="HMG_box_dom"/>
</dbReference>
<dbReference type="InterPro" id="IPR036910">
    <property type="entry name" value="HMG_box_dom_sf"/>
</dbReference>
<dbReference type="InterPro" id="IPR024970">
    <property type="entry name" value="Maelstrom"/>
</dbReference>
<dbReference type="InterPro" id="IPR039259">
    <property type="entry name" value="Protein_maelstrom"/>
</dbReference>
<dbReference type="PANTHER" id="PTHR21358">
    <property type="entry name" value="PROTEIN MAELSTROM HOMOLOG"/>
    <property type="match status" value="1"/>
</dbReference>
<dbReference type="PANTHER" id="PTHR21358:SF4">
    <property type="entry name" value="PROTEIN MAELSTROM HOMOLOG"/>
    <property type="match status" value="1"/>
</dbReference>
<dbReference type="Pfam" id="PF09011">
    <property type="entry name" value="HMG_box_2"/>
    <property type="match status" value="1"/>
</dbReference>
<dbReference type="Pfam" id="PF13017">
    <property type="entry name" value="Maelstrom"/>
    <property type="match status" value="1"/>
</dbReference>
<dbReference type="SUPFAM" id="SSF47095">
    <property type="entry name" value="HMG-box"/>
    <property type="match status" value="1"/>
</dbReference>
<comment type="function">
    <text evidence="1">Plays a central role during spermatogenesis by repressing transposable elements and preventing their mobilization, which is essential for the germline integrity. Acts via the piRNA metabolic process, which mediates the repression of transposable elements during meiosis by forming complexes composed of piRNAs and Piwi proteins and governs the methylation and subsequent repression of transposons. Its association with piP-bodies suggests a participation in the secondary piRNAs metabolic process. Required for the localization of germ-cell factors to the meiotic nuage (By similarity).</text>
</comment>
<comment type="subunit">
    <text evidence="1">Interacts with SMARCB1, SIN3B and DDX4. Interacts with piRNA-associated proteins TDRD1, PIWIL1 and PIWIL2 (By similarity). Interacts with TEX19 (By similarity).</text>
</comment>
<comment type="subcellular location">
    <subcellularLocation>
        <location evidence="1">Cytoplasm</location>
    </subcellularLocation>
    <subcellularLocation>
        <location evidence="1">Nucleus</location>
    </subcellularLocation>
    <text evidence="1">Component of the meiotic nuage, also named P granule, a germ-cell-specific organelle required to repress transposon activity during meiosis. Specifically localizes to piP-bodies, a subset of the nuage which contains secondary piRNAs (By similarity).</text>
</comment>
<comment type="alternative products">
    <event type="alternative splicing"/>
    <isoform>
        <id>Q96JY0-1</id>
        <name>1</name>
        <sequence type="displayed"/>
    </isoform>
    <isoform>
        <id>Q96JY0-2</id>
        <name>2</name>
        <sequence type="described" ref="VSP_036661"/>
    </isoform>
    <isoform>
        <id>Q96JY0-3</id>
        <name>3</name>
        <sequence type="described" ref="VSP_036660 VSP_036662"/>
    </isoform>
</comment>
<comment type="tissue specificity">
    <text evidence="3 4">Testis-specific. Expressed in various cancer cell lines, probably due to demethylation of its promoter.</text>
</comment>
<comment type="similarity">
    <text evidence="7">Belongs to the maelstrom family.</text>
</comment>
<keyword id="KW-0002">3D-structure</keyword>
<keyword id="KW-0025">Alternative splicing</keyword>
<keyword id="KW-0963">Cytoplasm</keyword>
<keyword id="KW-0217">Developmental protein</keyword>
<keyword id="KW-0221">Differentiation</keyword>
<keyword id="KW-0238">DNA-binding</keyword>
<keyword id="KW-0469">Meiosis</keyword>
<keyword id="KW-0539">Nucleus</keyword>
<keyword id="KW-1267">Proteomics identification</keyword>
<keyword id="KW-1185">Reference proteome</keyword>
<keyword id="KW-0943">RNA-mediated gene silencing</keyword>
<keyword id="KW-0744">Spermatogenesis</keyword>
<evidence type="ECO:0000250" key="1">
    <source>
        <dbReference type="UniProtKB" id="Q8BVN9"/>
    </source>
</evidence>
<evidence type="ECO:0000256" key="2">
    <source>
        <dbReference type="SAM" id="MobiDB-lite"/>
    </source>
</evidence>
<evidence type="ECO:0000269" key="3">
    <source>
    </source>
</evidence>
<evidence type="ECO:0000269" key="4">
    <source ref="1"/>
</evidence>
<evidence type="ECO:0000303" key="5">
    <source>
    </source>
</evidence>
<evidence type="ECO:0000303" key="6">
    <source ref="2"/>
</evidence>
<evidence type="ECO:0000305" key="7"/>
<evidence type="ECO:0007829" key="8">
    <source>
        <dbReference type="PDB" id="2CTO"/>
    </source>
</evidence>
<accession>Q96JY0</accession>
<accession>B4DY43</accession>
<accession>E9JVC3</accession>
<accession>Q49AP9</accession>
<accession>Q5VZP8</accession>
<accession>Q9UIW6</accession>
<sequence length="434" mass="49219">MPNRKASRNAYYFFVQEKIPELRRRGLPVARVADAIPYCSSDWALLREEEKEKYAEMAREWRAAQGKDPGPSEKQKPVFTPLRRPGMLVPKQNVSPPDMSALSLKGDQALLGGIFYFLNIFSHGELPPHCEQRFLPCEIGCVKYSLQEGIMADFHSFINPGEIPRGFRFHCQAASDSSHKIPISNFERGHNQATVLQNLYRFIHPNPGNWPPIYCKSDDRTRVNWCLKHMAKASEIRQDLQLLTVEDLVVGIYQQKFLKEPSKTWIRSLLDVAMWDYSSNTRCKWHEENDILFCALAVCKKIAYCISNSLATLFGIQLTEAHVPLQDYEASNSVTPKMVVLDAGRYQKLRVGSSGFSHFNSSNEEQRSNTPIGDYPSRAKISGQNSSVRGRGITRLLESISNSSSNIHKFSNCDTSLSPYMSQKDGYKSFSSLS</sequence>
<protein>
    <recommendedName>
        <fullName>Protein maelstrom homolog</fullName>
    </recommendedName>
</protein>
<organism>
    <name type="scientific">Homo sapiens</name>
    <name type="common">Human</name>
    <dbReference type="NCBI Taxonomy" id="9606"/>
    <lineage>
        <taxon>Eukaryota</taxon>
        <taxon>Metazoa</taxon>
        <taxon>Chordata</taxon>
        <taxon>Craniata</taxon>
        <taxon>Vertebrata</taxon>
        <taxon>Euteleostomi</taxon>
        <taxon>Mammalia</taxon>
        <taxon>Eutheria</taxon>
        <taxon>Euarchontoglires</taxon>
        <taxon>Primates</taxon>
        <taxon>Haplorrhini</taxon>
        <taxon>Catarrhini</taxon>
        <taxon>Hominidae</taxon>
        <taxon>Homo</taxon>
    </lineage>
</organism>
<reference key="1">
    <citation type="submission" date="2005-05" db="EMBL/GenBank/DDBJ databases">
        <title>MAEL, a gene expressed specifically in testis.</title>
        <authorList>
            <person name="Zhou J."/>
            <person name="Zhang J."/>
        </authorList>
    </citation>
    <scope>NUCLEOTIDE SEQUENCE [MRNA] (ISOFORM 1)</scope>
    <scope>TISSUE SPECIFICITY</scope>
    <source>
        <tissue>Testis</tissue>
    </source>
</reference>
<reference key="2">
    <citation type="submission" date="2010-01" db="EMBL/GenBank/DDBJ databases">
        <title>Identification of alternative splicing variants of MAEL gene.</title>
        <authorList>
            <person name="Zhou J."/>
            <person name="Xiao L."/>
            <person name="Sun W."/>
            <person name="Wang L."/>
            <person name="Wu Y."/>
            <person name="Qiao X."/>
            <person name="Zhang J."/>
        </authorList>
    </citation>
    <scope>NUCLEOTIDE SEQUENCE [MRNA] (ISOFORM 3)</scope>
    <source>
        <tissue>Testis</tissue>
    </source>
</reference>
<reference key="3">
    <citation type="journal article" date="2004" name="Nat. Genet.">
        <title>Complete sequencing and characterization of 21,243 full-length human cDNAs.</title>
        <authorList>
            <person name="Ota T."/>
            <person name="Suzuki Y."/>
            <person name="Nishikawa T."/>
            <person name="Otsuki T."/>
            <person name="Sugiyama T."/>
            <person name="Irie R."/>
            <person name="Wakamatsu A."/>
            <person name="Hayashi K."/>
            <person name="Sato H."/>
            <person name="Nagai K."/>
            <person name="Kimura K."/>
            <person name="Makita H."/>
            <person name="Sekine M."/>
            <person name="Obayashi M."/>
            <person name="Nishi T."/>
            <person name="Shibahara T."/>
            <person name="Tanaka T."/>
            <person name="Ishii S."/>
            <person name="Yamamoto J."/>
            <person name="Saito K."/>
            <person name="Kawai Y."/>
            <person name="Isono Y."/>
            <person name="Nakamura Y."/>
            <person name="Nagahari K."/>
            <person name="Murakami K."/>
            <person name="Yasuda T."/>
            <person name="Iwayanagi T."/>
            <person name="Wagatsuma M."/>
            <person name="Shiratori A."/>
            <person name="Sudo H."/>
            <person name="Hosoiri T."/>
            <person name="Kaku Y."/>
            <person name="Kodaira H."/>
            <person name="Kondo H."/>
            <person name="Sugawara M."/>
            <person name="Takahashi M."/>
            <person name="Kanda K."/>
            <person name="Yokoi T."/>
            <person name="Furuya T."/>
            <person name="Kikkawa E."/>
            <person name="Omura Y."/>
            <person name="Abe K."/>
            <person name="Kamihara K."/>
            <person name="Katsuta N."/>
            <person name="Sato K."/>
            <person name="Tanikawa M."/>
            <person name="Yamazaki M."/>
            <person name="Ninomiya K."/>
            <person name="Ishibashi T."/>
            <person name="Yamashita H."/>
            <person name="Murakawa K."/>
            <person name="Fujimori K."/>
            <person name="Tanai H."/>
            <person name="Kimata M."/>
            <person name="Watanabe M."/>
            <person name="Hiraoka S."/>
            <person name="Chiba Y."/>
            <person name="Ishida S."/>
            <person name="Ono Y."/>
            <person name="Takiguchi S."/>
            <person name="Watanabe S."/>
            <person name="Yosida M."/>
            <person name="Hotuta T."/>
            <person name="Kusano J."/>
            <person name="Kanehori K."/>
            <person name="Takahashi-Fujii A."/>
            <person name="Hara H."/>
            <person name="Tanase T.-O."/>
            <person name="Nomura Y."/>
            <person name="Togiya S."/>
            <person name="Komai F."/>
            <person name="Hara R."/>
            <person name="Takeuchi K."/>
            <person name="Arita M."/>
            <person name="Imose N."/>
            <person name="Musashino K."/>
            <person name="Yuuki H."/>
            <person name="Oshima A."/>
            <person name="Sasaki N."/>
            <person name="Aotsuka S."/>
            <person name="Yoshikawa Y."/>
            <person name="Matsunawa H."/>
            <person name="Ichihara T."/>
            <person name="Shiohata N."/>
            <person name="Sano S."/>
            <person name="Moriya S."/>
            <person name="Momiyama H."/>
            <person name="Satoh N."/>
            <person name="Takami S."/>
            <person name="Terashima Y."/>
            <person name="Suzuki O."/>
            <person name="Nakagawa S."/>
            <person name="Senoh A."/>
            <person name="Mizoguchi H."/>
            <person name="Goto Y."/>
            <person name="Shimizu F."/>
            <person name="Wakebe H."/>
            <person name="Hishigaki H."/>
            <person name="Watanabe T."/>
            <person name="Sugiyama A."/>
            <person name="Takemoto M."/>
            <person name="Kawakami B."/>
            <person name="Yamazaki M."/>
            <person name="Watanabe K."/>
            <person name="Kumagai A."/>
            <person name="Itakura S."/>
            <person name="Fukuzumi Y."/>
            <person name="Fujimori Y."/>
            <person name="Komiyama M."/>
            <person name="Tashiro H."/>
            <person name="Tanigami A."/>
            <person name="Fujiwara T."/>
            <person name="Ono T."/>
            <person name="Yamada K."/>
            <person name="Fujii Y."/>
            <person name="Ozaki K."/>
            <person name="Hirao M."/>
            <person name="Ohmori Y."/>
            <person name="Kawabata A."/>
            <person name="Hikiji T."/>
            <person name="Kobatake N."/>
            <person name="Inagaki H."/>
            <person name="Ikema Y."/>
            <person name="Okamoto S."/>
            <person name="Okitani R."/>
            <person name="Kawakami T."/>
            <person name="Noguchi S."/>
            <person name="Itoh T."/>
            <person name="Shigeta K."/>
            <person name="Senba T."/>
            <person name="Matsumura K."/>
            <person name="Nakajima Y."/>
            <person name="Mizuno T."/>
            <person name="Morinaga M."/>
            <person name="Sasaki M."/>
            <person name="Togashi T."/>
            <person name="Oyama M."/>
            <person name="Hata H."/>
            <person name="Watanabe M."/>
            <person name="Komatsu T."/>
            <person name="Mizushima-Sugano J."/>
            <person name="Satoh T."/>
            <person name="Shirai Y."/>
            <person name="Takahashi Y."/>
            <person name="Nakagawa K."/>
            <person name="Okumura K."/>
            <person name="Nagase T."/>
            <person name="Nomura N."/>
            <person name="Kikuchi H."/>
            <person name="Masuho Y."/>
            <person name="Yamashita R."/>
            <person name="Nakai K."/>
            <person name="Yada T."/>
            <person name="Nakamura Y."/>
            <person name="Ohara O."/>
            <person name="Isogai T."/>
            <person name="Sugano S."/>
        </authorList>
    </citation>
    <scope>NUCLEOTIDE SEQUENCE [LARGE SCALE MRNA] (ISOFORM 1)</scope>
    <source>
        <tissue>Placenta</tissue>
        <tissue>Testis</tissue>
    </source>
</reference>
<reference key="4">
    <citation type="journal article" date="2006" name="Nature">
        <title>The DNA sequence and biological annotation of human chromosome 1.</title>
        <authorList>
            <person name="Gregory S.G."/>
            <person name="Barlow K.F."/>
            <person name="McLay K.E."/>
            <person name="Kaul R."/>
            <person name="Swarbreck D."/>
            <person name="Dunham A."/>
            <person name="Scott C.E."/>
            <person name="Howe K.L."/>
            <person name="Woodfine K."/>
            <person name="Spencer C.C.A."/>
            <person name="Jones M.C."/>
            <person name="Gillson C."/>
            <person name="Searle S."/>
            <person name="Zhou Y."/>
            <person name="Kokocinski F."/>
            <person name="McDonald L."/>
            <person name="Evans R."/>
            <person name="Phillips K."/>
            <person name="Atkinson A."/>
            <person name="Cooper R."/>
            <person name="Jones C."/>
            <person name="Hall R.E."/>
            <person name="Andrews T.D."/>
            <person name="Lloyd C."/>
            <person name="Ainscough R."/>
            <person name="Almeida J.P."/>
            <person name="Ambrose K.D."/>
            <person name="Anderson F."/>
            <person name="Andrew R.W."/>
            <person name="Ashwell R.I.S."/>
            <person name="Aubin K."/>
            <person name="Babbage A.K."/>
            <person name="Bagguley C.L."/>
            <person name="Bailey J."/>
            <person name="Beasley H."/>
            <person name="Bethel G."/>
            <person name="Bird C.P."/>
            <person name="Bray-Allen S."/>
            <person name="Brown J.Y."/>
            <person name="Brown A.J."/>
            <person name="Buckley D."/>
            <person name="Burton J."/>
            <person name="Bye J."/>
            <person name="Carder C."/>
            <person name="Chapman J.C."/>
            <person name="Clark S.Y."/>
            <person name="Clarke G."/>
            <person name="Clee C."/>
            <person name="Cobley V."/>
            <person name="Collier R.E."/>
            <person name="Corby N."/>
            <person name="Coville G.J."/>
            <person name="Davies J."/>
            <person name="Deadman R."/>
            <person name="Dunn M."/>
            <person name="Earthrowl M."/>
            <person name="Ellington A.G."/>
            <person name="Errington H."/>
            <person name="Frankish A."/>
            <person name="Frankland J."/>
            <person name="French L."/>
            <person name="Garner P."/>
            <person name="Garnett J."/>
            <person name="Gay L."/>
            <person name="Ghori M.R.J."/>
            <person name="Gibson R."/>
            <person name="Gilby L.M."/>
            <person name="Gillett W."/>
            <person name="Glithero R.J."/>
            <person name="Grafham D.V."/>
            <person name="Griffiths C."/>
            <person name="Griffiths-Jones S."/>
            <person name="Grocock R."/>
            <person name="Hammond S."/>
            <person name="Harrison E.S.I."/>
            <person name="Hart E."/>
            <person name="Haugen E."/>
            <person name="Heath P.D."/>
            <person name="Holmes S."/>
            <person name="Holt K."/>
            <person name="Howden P.J."/>
            <person name="Hunt A.R."/>
            <person name="Hunt S.E."/>
            <person name="Hunter G."/>
            <person name="Isherwood J."/>
            <person name="James R."/>
            <person name="Johnson C."/>
            <person name="Johnson D."/>
            <person name="Joy A."/>
            <person name="Kay M."/>
            <person name="Kershaw J.K."/>
            <person name="Kibukawa M."/>
            <person name="Kimberley A.M."/>
            <person name="King A."/>
            <person name="Knights A.J."/>
            <person name="Lad H."/>
            <person name="Laird G."/>
            <person name="Lawlor S."/>
            <person name="Leongamornlert D.A."/>
            <person name="Lloyd D.M."/>
            <person name="Loveland J."/>
            <person name="Lovell J."/>
            <person name="Lush M.J."/>
            <person name="Lyne R."/>
            <person name="Martin S."/>
            <person name="Mashreghi-Mohammadi M."/>
            <person name="Matthews L."/>
            <person name="Matthews N.S.W."/>
            <person name="McLaren S."/>
            <person name="Milne S."/>
            <person name="Mistry S."/>
            <person name="Moore M.J.F."/>
            <person name="Nickerson T."/>
            <person name="O'Dell C.N."/>
            <person name="Oliver K."/>
            <person name="Palmeiri A."/>
            <person name="Palmer S.A."/>
            <person name="Parker A."/>
            <person name="Patel D."/>
            <person name="Pearce A.V."/>
            <person name="Peck A.I."/>
            <person name="Pelan S."/>
            <person name="Phelps K."/>
            <person name="Phillimore B.J."/>
            <person name="Plumb R."/>
            <person name="Rajan J."/>
            <person name="Raymond C."/>
            <person name="Rouse G."/>
            <person name="Saenphimmachak C."/>
            <person name="Sehra H.K."/>
            <person name="Sheridan E."/>
            <person name="Shownkeen R."/>
            <person name="Sims S."/>
            <person name="Skuce C.D."/>
            <person name="Smith M."/>
            <person name="Steward C."/>
            <person name="Subramanian S."/>
            <person name="Sycamore N."/>
            <person name="Tracey A."/>
            <person name="Tromans A."/>
            <person name="Van Helmond Z."/>
            <person name="Wall M."/>
            <person name="Wallis J.M."/>
            <person name="White S."/>
            <person name="Whitehead S.L."/>
            <person name="Wilkinson J.E."/>
            <person name="Willey D.L."/>
            <person name="Williams H."/>
            <person name="Wilming L."/>
            <person name="Wray P.W."/>
            <person name="Wu Z."/>
            <person name="Coulson A."/>
            <person name="Vaudin M."/>
            <person name="Sulston J.E."/>
            <person name="Durbin R.M."/>
            <person name="Hubbard T."/>
            <person name="Wooster R."/>
            <person name="Dunham I."/>
            <person name="Carter N.P."/>
            <person name="McVean G."/>
            <person name="Ross M.T."/>
            <person name="Harrow J."/>
            <person name="Olson M.V."/>
            <person name="Beck S."/>
            <person name="Rogers J."/>
            <person name="Bentley D.R."/>
        </authorList>
    </citation>
    <scope>NUCLEOTIDE SEQUENCE [LARGE SCALE GENOMIC DNA]</scope>
</reference>
<reference key="5">
    <citation type="journal article" date="2004" name="Genome Res.">
        <title>The status, quality, and expansion of the NIH full-length cDNA project: the Mammalian Gene Collection (MGC).</title>
        <authorList>
            <consortium name="The MGC Project Team"/>
        </authorList>
    </citation>
    <scope>NUCLEOTIDE SEQUENCE [LARGE SCALE MRNA] (ISOFORMS 1 AND 3)</scope>
    <source>
        <tissue>Testis</tissue>
    </source>
</reference>
<reference key="6">
    <citation type="journal article" date="2007" name="BMC Genomics">
        <title>The full-ORF clone resource of the German cDNA consortium.</title>
        <authorList>
            <person name="Bechtel S."/>
            <person name="Rosenfelder H."/>
            <person name="Duda A."/>
            <person name="Schmidt C.P."/>
            <person name="Ernst U."/>
            <person name="Wellenreuther R."/>
            <person name="Mehrle A."/>
            <person name="Schuster C."/>
            <person name="Bahr A."/>
            <person name="Bloecker H."/>
            <person name="Heubner D."/>
            <person name="Hoerlein A."/>
            <person name="Michel G."/>
            <person name="Wedler H."/>
            <person name="Koehrer K."/>
            <person name="Ottenwaelder B."/>
            <person name="Poustka A."/>
            <person name="Wiemann S."/>
            <person name="Schupp I."/>
        </authorList>
    </citation>
    <scope>NUCLEOTIDE SEQUENCE [LARGE SCALE MRNA] OF 59-434 (ISOFORM 1)</scope>
    <source>
        <tissue>Testis</tissue>
    </source>
</reference>
<reference key="7">
    <citation type="journal article" date="2010" name="Mol. Biol. Rep.">
        <title>Identification of a novel human cancer/testis gene MAEL that is regulated by DNA methylation.</title>
        <authorList>
            <person name="Xiao L."/>
            <person name="Wang Y."/>
            <person name="Zhou Y."/>
            <person name="Sun Y."/>
            <person name="Sun W."/>
            <person name="Wang L."/>
            <person name="Zhou C."/>
            <person name="Zhou J."/>
            <person name="Zhang J."/>
        </authorList>
    </citation>
    <scope>TISSUE SPECIFICITY</scope>
</reference>
<reference key="8">
    <citation type="submission" date="2005-11" db="PDB data bank">
        <title>Solution structure of the HMG box-like domain from human hypothetical protein FLJ14904.</title>
        <authorList>
            <consortium name="RIKEN structural genomics initiative (RSGI)"/>
        </authorList>
    </citation>
    <scope>STRUCTURE BY NMR OF 1-80</scope>
</reference>
<feature type="chain" id="PRO_0000232501" description="Protein maelstrom homolog">
    <location>
        <begin position="1"/>
        <end position="434"/>
    </location>
</feature>
<feature type="DNA-binding region" description="HMG box">
    <location>
        <begin position="4"/>
        <end position="73"/>
    </location>
</feature>
<feature type="region of interest" description="Disordered" evidence="2">
    <location>
        <begin position="357"/>
        <end position="385"/>
    </location>
</feature>
<feature type="splice variant" id="VSP_036660" description="In isoform 3." evidence="5 6">
    <location>
        <begin position="1"/>
        <end position="278"/>
    </location>
</feature>
<feature type="splice variant" id="VSP_036661" description="In isoform 2." evidence="7">
    <location>
        <begin position="45"/>
        <end position="75"/>
    </location>
</feature>
<feature type="splice variant" id="VSP_036662" description="In isoform 3." evidence="5 6">
    <original>SNT</original>
    <variation>MIQ</variation>
    <location>
        <begin position="279"/>
        <end position="281"/>
    </location>
</feature>
<feature type="sequence variant" id="VAR_034103" description="In dbSNP:rs11578336.">
    <original>S</original>
    <variation>A</variation>
    <location>
        <position position="41"/>
    </location>
</feature>
<feature type="helix" evidence="8">
    <location>
        <begin position="10"/>
        <end position="16"/>
    </location>
</feature>
<feature type="helix" evidence="8">
    <location>
        <begin position="19"/>
        <end position="25"/>
    </location>
</feature>
<feature type="helix" evidence="8">
    <location>
        <begin position="32"/>
        <end position="35"/>
    </location>
</feature>
<feature type="helix" evidence="8">
    <location>
        <begin position="37"/>
        <end position="39"/>
    </location>
</feature>
<feature type="helix" evidence="8">
    <location>
        <begin position="40"/>
        <end position="45"/>
    </location>
</feature>
<feature type="helix" evidence="8">
    <location>
        <begin position="48"/>
        <end position="67"/>
    </location>
</feature>